<sequence length="645" mass="69957">MILCRGLFMAVIGIDLGTTNSCVAVMEGGDAKAIENSEGARTTPSIVAFTDSEVLVGDPAKRQATTNAKNTIYASKRLIGRRYQDTRDIKTSYDIVSAKNGDAWIKVRDKDYSPSQIGALILEKMKETAERHLGCKVEKAVITVPAYFDDAQRQATKDAGKIAGLDVIRIINEPTAAALAYGLNKSDKQKVIAVYDLGGGTFDVSILEIADGVFEVKSTNGDTMLGGEDFDHAIMEYLMDDFKKSTGIDLHSDAMAMQRIKEAAEKAKIELSSRMETDINLPFLSSDSTGPKHLSLKLTRATFENLVSDLVKRTIEPCKKALKDAGISADKIDEVVLVGGMTRVPKIIQTVKEFFGKEPHKGVNPDEVVAIGAAIQGGILAGDVRDVLLLDVTPLSLGIETLGGVFTPLIERNTTIPTKKSQVFSTAEDGQTAVTIKVFQGERKMANDNKLLGQFSLEGIPPAPRGMPQIEVTFDIDANGIVHVSAKDKASGKEQAIRIQSSGGLTDDEIQNMIKEAESKAEEDEKRKKFVEVKNNAENLVHSTEKSLKEHGDKISNADKLDIENAIRDLKDCISKDNIEDTDTMQNKLDHLMKVSMKLGEALYSNTNNATAGDNNTTDTGSSSNSDGSKVVDSDYQEIDKKDGK</sequence>
<dbReference type="EMBL" id="CR925677">
    <property type="protein sequence ID" value="CAI28019.1"/>
    <property type="molecule type" value="Genomic_DNA"/>
</dbReference>
<dbReference type="RefSeq" id="WP_011255680.1">
    <property type="nucleotide sequence ID" value="NC_006831.1"/>
</dbReference>
<dbReference type="SMR" id="Q5FFM4"/>
<dbReference type="KEGG" id="erg:ERGA_CDS_05670"/>
<dbReference type="HOGENOM" id="CLU_005965_2_1_5"/>
<dbReference type="Proteomes" id="UP000000533">
    <property type="component" value="Chromosome"/>
</dbReference>
<dbReference type="GO" id="GO:0005524">
    <property type="term" value="F:ATP binding"/>
    <property type="evidence" value="ECO:0007669"/>
    <property type="project" value="UniProtKB-UniRule"/>
</dbReference>
<dbReference type="GO" id="GO:0140662">
    <property type="term" value="F:ATP-dependent protein folding chaperone"/>
    <property type="evidence" value="ECO:0007669"/>
    <property type="project" value="InterPro"/>
</dbReference>
<dbReference type="GO" id="GO:0051082">
    <property type="term" value="F:unfolded protein binding"/>
    <property type="evidence" value="ECO:0007669"/>
    <property type="project" value="InterPro"/>
</dbReference>
<dbReference type="FunFam" id="2.60.34.10:FF:000014">
    <property type="entry name" value="Chaperone protein DnaK HSP70"/>
    <property type="match status" value="1"/>
</dbReference>
<dbReference type="FunFam" id="3.30.420.40:FF:000020">
    <property type="entry name" value="Chaperone protein HscA homolog"/>
    <property type="match status" value="1"/>
</dbReference>
<dbReference type="FunFam" id="1.20.1270.10:FF:000001">
    <property type="entry name" value="Molecular chaperone DnaK"/>
    <property type="match status" value="1"/>
</dbReference>
<dbReference type="FunFam" id="3.30.420.40:FF:000004">
    <property type="entry name" value="Molecular chaperone DnaK"/>
    <property type="match status" value="1"/>
</dbReference>
<dbReference type="FunFam" id="3.90.640.10:FF:000003">
    <property type="entry name" value="Molecular chaperone DnaK"/>
    <property type="match status" value="1"/>
</dbReference>
<dbReference type="Gene3D" id="1.20.1270.10">
    <property type="match status" value="1"/>
</dbReference>
<dbReference type="Gene3D" id="3.30.420.40">
    <property type="match status" value="2"/>
</dbReference>
<dbReference type="Gene3D" id="3.90.640.10">
    <property type="entry name" value="Actin, Chain A, domain 4"/>
    <property type="match status" value="1"/>
</dbReference>
<dbReference type="Gene3D" id="2.60.34.10">
    <property type="entry name" value="Substrate Binding Domain Of DNAk, Chain A, domain 1"/>
    <property type="match status" value="1"/>
</dbReference>
<dbReference type="HAMAP" id="MF_00332">
    <property type="entry name" value="DnaK"/>
    <property type="match status" value="1"/>
</dbReference>
<dbReference type="InterPro" id="IPR043129">
    <property type="entry name" value="ATPase_NBD"/>
</dbReference>
<dbReference type="InterPro" id="IPR012725">
    <property type="entry name" value="Chaperone_DnaK"/>
</dbReference>
<dbReference type="InterPro" id="IPR018181">
    <property type="entry name" value="Heat_shock_70_CS"/>
</dbReference>
<dbReference type="InterPro" id="IPR029048">
    <property type="entry name" value="HSP70_C_sf"/>
</dbReference>
<dbReference type="InterPro" id="IPR029047">
    <property type="entry name" value="HSP70_peptide-bd_sf"/>
</dbReference>
<dbReference type="InterPro" id="IPR013126">
    <property type="entry name" value="Hsp_70_fam"/>
</dbReference>
<dbReference type="NCBIfam" id="NF001413">
    <property type="entry name" value="PRK00290.1"/>
    <property type="match status" value="1"/>
</dbReference>
<dbReference type="NCBIfam" id="NF003520">
    <property type="entry name" value="PRK05183.1"/>
    <property type="match status" value="1"/>
</dbReference>
<dbReference type="NCBIfam" id="TIGR02350">
    <property type="entry name" value="prok_dnaK"/>
    <property type="match status" value="1"/>
</dbReference>
<dbReference type="PANTHER" id="PTHR19375">
    <property type="entry name" value="HEAT SHOCK PROTEIN 70KDA"/>
    <property type="match status" value="1"/>
</dbReference>
<dbReference type="Pfam" id="PF00012">
    <property type="entry name" value="HSP70"/>
    <property type="match status" value="1"/>
</dbReference>
<dbReference type="PRINTS" id="PR00301">
    <property type="entry name" value="HEATSHOCK70"/>
</dbReference>
<dbReference type="SUPFAM" id="SSF53067">
    <property type="entry name" value="Actin-like ATPase domain"/>
    <property type="match status" value="2"/>
</dbReference>
<dbReference type="SUPFAM" id="SSF100934">
    <property type="entry name" value="Heat shock protein 70kD (HSP70), C-terminal subdomain"/>
    <property type="match status" value="1"/>
</dbReference>
<dbReference type="SUPFAM" id="SSF100920">
    <property type="entry name" value="Heat shock protein 70kD (HSP70), peptide-binding domain"/>
    <property type="match status" value="1"/>
</dbReference>
<dbReference type="PROSITE" id="PS00297">
    <property type="entry name" value="HSP70_1"/>
    <property type="match status" value="1"/>
</dbReference>
<dbReference type="PROSITE" id="PS00329">
    <property type="entry name" value="HSP70_2"/>
    <property type="match status" value="1"/>
</dbReference>
<dbReference type="PROSITE" id="PS01036">
    <property type="entry name" value="HSP70_3"/>
    <property type="match status" value="1"/>
</dbReference>
<proteinExistence type="inferred from homology"/>
<comment type="function">
    <text evidence="1">Acts as a chaperone.</text>
</comment>
<comment type="induction">
    <text evidence="1">By stress conditions e.g. heat shock.</text>
</comment>
<comment type="similarity">
    <text evidence="1">Belongs to the heat shock protein 70 family.</text>
</comment>
<reference key="1">
    <citation type="journal article" date="2006" name="J. Bacteriol.">
        <title>Comparative genomic analysis of three strains of Ehrlichia ruminantium reveals an active process of genome size plasticity.</title>
        <authorList>
            <person name="Frutos R."/>
            <person name="Viari A."/>
            <person name="Ferraz C."/>
            <person name="Morgat A."/>
            <person name="Eychenie S."/>
            <person name="Kandassamy Y."/>
            <person name="Chantal I."/>
            <person name="Bensaid A."/>
            <person name="Coissac E."/>
            <person name="Vachiery N."/>
            <person name="Demaille J."/>
            <person name="Martinez D."/>
        </authorList>
    </citation>
    <scope>NUCLEOTIDE SEQUENCE [LARGE SCALE GENOMIC DNA]</scope>
    <source>
        <strain>Gardel</strain>
    </source>
</reference>
<name>DNAK_EHRRG</name>
<gene>
    <name evidence="1" type="primary">dnaK</name>
    <name type="ordered locus">ERGA_CDS_05670</name>
</gene>
<protein>
    <recommendedName>
        <fullName evidence="1">Chaperone protein DnaK</fullName>
    </recommendedName>
    <alternativeName>
        <fullName evidence="1">HSP70</fullName>
    </alternativeName>
    <alternativeName>
        <fullName evidence="1">Heat shock 70 kDa protein</fullName>
    </alternativeName>
    <alternativeName>
        <fullName evidence="1">Heat shock protein 70</fullName>
    </alternativeName>
</protein>
<evidence type="ECO:0000255" key="1">
    <source>
        <dbReference type="HAMAP-Rule" id="MF_00332"/>
    </source>
</evidence>
<evidence type="ECO:0000256" key="2">
    <source>
        <dbReference type="SAM" id="MobiDB-lite"/>
    </source>
</evidence>
<accession>Q5FFM4</accession>
<organism>
    <name type="scientific">Ehrlichia ruminantium (strain Gardel)</name>
    <dbReference type="NCBI Taxonomy" id="302409"/>
    <lineage>
        <taxon>Bacteria</taxon>
        <taxon>Pseudomonadati</taxon>
        <taxon>Pseudomonadota</taxon>
        <taxon>Alphaproteobacteria</taxon>
        <taxon>Rickettsiales</taxon>
        <taxon>Anaplasmataceae</taxon>
        <taxon>Ehrlichia</taxon>
    </lineage>
</organism>
<feature type="chain" id="PRO_0000225962" description="Chaperone protein DnaK">
    <location>
        <begin position="1"/>
        <end position="645"/>
    </location>
</feature>
<feature type="region of interest" description="Disordered" evidence="2">
    <location>
        <begin position="606"/>
        <end position="645"/>
    </location>
</feature>
<feature type="compositionally biased region" description="Low complexity" evidence="2">
    <location>
        <begin position="606"/>
        <end position="629"/>
    </location>
</feature>
<feature type="compositionally biased region" description="Basic and acidic residues" evidence="2">
    <location>
        <begin position="630"/>
        <end position="645"/>
    </location>
</feature>
<feature type="modified residue" description="Phosphothreonine; by autocatalysis" evidence="1">
    <location>
        <position position="201"/>
    </location>
</feature>
<keyword id="KW-0067">ATP-binding</keyword>
<keyword id="KW-0143">Chaperone</keyword>
<keyword id="KW-0547">Nucleotide-binding</keyword>
<keyword id="KW-0597">Phosphoprotein</keyword>
<keyword id="KW-0346">Stress response</keyword>